<feature type="chain" id="PRO_0000377258" description="tRNA dimethylallyltransferase 2">
    <location>
        <begin position="1"/>
        <end position="313"/>
    </location>
</feature>
<feature type="region of interest" description="Interaction with substrate tRNA" evidence="1">
    <location>
        <begin position="41"/>
        <end position="44"/>
    </location>
</feature>
<feature type="region of interest" description="Interaction with substrate tRNA" evidence="1">
    <location>
        <begin position="161"/>
        <end position="165"/>
    </location>
</feature>
<feature type="binding site" evidence="1">
    <location>
        <begin position="16"/>
        <end position="23"/>
    </location>
    <ligand>
        <name>ATP</name>
        <dbReference type="ChEBI" id="CHEBI:30616"/>
    </ligand>
</feature>
<feature type="binding site" evidence="1">
    <location>
        <begin position="18"/>
        <end position="23"/>
    </location>
    <ligand>
        <name>substrate</name>
    </ligand>
</feature>
<feature type="site" description="Interaction with substrate tRNA" evidence="1">
    <location>
        <position position="106"/>
    </location>
</feature>
<evidence type="ECO:0000255" key="1">
    <source>
        <dbReference type="HAMAP-Rule" id="MF_00185"/>
    </source>
</evidence>
<proteinExistence type="inferred from homology"/>
<keyword id="KW-0067">ATP-binding</keyword>
<keyword id="KW-0460">Magnesium</keyword>
<keyword id="KW-0547">Nucleotide-binding</keyword>
<keyword id="KW-1185">Reference proteome</keyword>
<keyword id="KW-0808">Transferase</keyword>
<keyword id="KW-0819">tRNA processing</keyword>
<gene>
    <name evidence="1" type="primary">miaA2</name>
    <name type="ordered locus">Ppro_3245</name>
</gene>
<name>MIAA2_PELPD</name>
<organism>
    <name type="scientific">Pelobacter propionicus (strain DSM 2379 / NBRC 103807 / OttBd1)</name>
    <dbReference type="NCBI Taxonomy" id="338966"/>
    <lineage>
        <taxon>Bacteria</taxon>
        <taxon>Pseudomonadati</taxon>
        <taxon>Thermodesulfobacteriota</taxon>
        <taxon>Desulfuromonadia</taxon>
        <taxon>Desulfuromonadales</taxon>
        <taxon>Desulfuromonadaceae</taxon>
        <taxon>Pelobacter</taxon>
    </lineage>
</organism>
<dbReference type="EC" id="2.5.1.75" evidence="1"/>
<dbReference type="EMBL" id="CP000482">
    <property type="protein sequence ID" value="ABL00839.1"/>
    <property type="molecule type" value="Genomic_DNA"/>
</dbReference>
<dbReference type="RefSeq" id="WP_011737056.1">
    <property type="nucleotide sequence ID" value="NC_008609.1"/>
</dbReference>
<dbReference type="SMR" id="A1AU18"/>
<dbReference type="STRING" id="338966.Ppro_3245"/>
<dbReference type="KEGG" id="ppd:Ppro_3245"/>
<dbReference type="eggNOG" id="COG0324">
    <property type="taxonomic scope" value="Bacteria"/>
</dbReference>
<dbReference type="HOGENOM" id="CLU_032616_0_1_7"/>
<dbReference type="OrthoDB" id="9776390at2"/>
<dbReference type="Proteomes" id="UP000006732">
    <property type="component" value="Chromosome"/>
</dbReference>
<dbReference type="GO" id="GO:0005524">
    <property type="term" value="F:ATP binding"/>
    <property type="evidence" value="ECO:0007669"/>
    <property type="project" value="UniProtKB-UniRule"/>
</dbReference>
<dbReference type="GO" id="GO:0052381">
    <property type="term" value="F:tRNA dimethylallyltransferase activity"/>
    <property type="evidence" value="ECO:0007669"/>
    <property type="project" value="UniProtKB-UniRule"/>
</dbReference>
<dbReference type="GO" id="GO:0006400">
    <property type="term" value="P:tRNA modification"/>
    <property type="evidence" value="ECO:0007669"/>
    <property type="project" value="TreeGrafter"/>
</dbReference>
<dbReference type="Gene3D" id="3.40.50.300">
    <property type="entry name" value="P-loop containing nucleotide triphosphate hydrolases"/>
    <property type="match status" value="1"/>
</dbReference>
<dbReference type="HAMAP" id="MF_00185">
    <property type="entry name" value="IPP_trans"/>
    <property type="match status" value="1"/>
</dbReference>
<dbReference type="InterPro" id="IPR039657">
    <property type="entry name" value="Dimethylallyltransferase"/>
</dbReference>
<dbReference type="InterPro" id="IPR018022">
    <property type="entry name" value="IPT"/>
</dbReference>
<dbReference type="InterPro" id="IPR027417">
    <property type="entry name" value="P-loop_NTPase"/>
</dbReference>
<dbReference type="NCBIfam" id="TIGR00174">
    <property type="entry name" value="miaA"/>
    <property type="match status" value="1"/>
</dbReference>
<dbReference type="PANTHER" id="PTHR11088">
    <property type="entry name" value="TRNA DIMETHYLALLYLTRANSFERASE"/>
    <property type="match status" value="1"/>
</dbReference>
<dbReference type="PANTHER" id="PTHR11088:SF60">
    <property type="entry name" value="TRNA DIMETHYLALLYLTRANSFERASE"/>
    <property type="match status" value="1"/>
</dbReference>
<dbReference type="Pfam" id="PF01715">
    <property type="entry name" value="IPPT"/>
    <property type="match status" value="1"/>
</dbReference>
<dbReference type="SUPFAM" id="SSF52540">
    <property type="entry name" value="P-loop containing nucleoside triphosphate hydrolases"/>
    <property type="match status" value="2"/>
</dbReference>
<reference key="1">
    <citation type="submission" date="2006-10" db="EMBL/GenBank/DDBJ databases">
        <title>Complete sequence of chromosome of Pelobacter propionicus DSM 2379.</title>
        <authorList>
            <consortium name="US DOE Joint Genome Institute"/>
            <person name="Copeland A."/>
            <person name="Lucas S."/>
            <person name="Lapidus A."/>
            <person name="Barry K."/>
            <person name="Detter J.C."/>
            <person name="Glavina del Rio T."/>
            <person name="Hammon N."/>
            <person name="Israni S."/>
            <person name="Dalin E."/>
            <person name="Tice H."/>
            <person name="Pitluck S."/>
            <person name="Saunders E."/>
            <person name="Brettin T."/>
            <person name="Bruce D."/>
            <person name="Han C."/>
            <person name="Tapia R."/>
            <person name="Schmutz J."/>
            <person name="Larimer F."/>
            <person name="Land M."/>
            <person name="Hauser L."/>
            <person name="Kyrpides N."/>
            <person name="Kim E."/>
            <person name="Lovley D."/>
            <person name="Richardson P."/>
        </authorList>
    </citation>
    <scope>NUCLEOTIDE SEQUENCE [LARGE SCALE GENOMIC DNA]</scope>
    <source>
        <strain>DSM 2379 / NBRC 103807 / OttBd1</strain>
    </source>
</reference>
<comment type="function">
    <text evidence="1">Catalyzes the transfer of a dimethylallyl group onto the adenine at position 37 in tRNAs that read codons beginning with uridine, leading to the formation of N6-(dimethylallyl)adenosine (i(6)A).</text>
</comment>
<comment type="catalytic activity">
    <reaction evidence="1">
        <text>adenosine(37) in tRNA + dimethylallyl diphosphate = N(6)-dimethylallyladenosine(37) in tRNA + diphosphate</text>
        <dbReference type="Rhea" id="RHEA:26482"/>
        <dbReference type="Rhea" id="RHEA-COMP:10162"/>
        <dbReference type="Rhea" id="RHEA-COMP:10375"/>
        <dbReference type="ChEBI" id="CHEBI:33019"/>
        <dbReference type="ChEBI" id="CHEBI:57623"/>
        <dbReference type="ChEBI" id="CHEBI:74411"/>
        <dbReference type="ChEBI" id="CHEBI:74415"/>
        <dbReference type="EC" id="2.5.1.75"/>
    </reaction>
</comment>
<comment type="cofactor">
    <cofactor evidence="1">
        <name>Mg(2+)</name>
        <dbReference type="ChEBI" id="CHEBI:18420"/>
    </cofactor>
</comment>
<comment type="subunit">
    <text evidence="1">Monomer.</text>
</comment>
<comment type="similarity">
    <text evidence="1">Belongs to the IPP transferase family.</text>
</comment>
<sequence length="313" mass="35962">MNVSNAPRFNLLTILGPTASGKTRLAVNLARELGGEIISADSRQVFRRMDIGTGKDLHEYGEVHHHLIDILEPGEEFSVFAFQRLFLEAVGDICGRGRLPLLCGGTGMYLDAALRRYRMHEVPEDREWRASLEGVGDGELASRLREFRPGLHNSTDLVDRQRTIRALEIARFQADCAGDDEPFPDLRPLVIGIRWERAELRRRITERLRQRLESGMIEEVRRLNDGGVPWERLDYYGLEYRFVGMYLRDELSRNDLFQKLNSAIHDFAKRQETWFRRMERNGVAINWVDGGGGPLSEARRVILDNSYHLATGR</sequence>
<accession>A1AU18</accession>
<protein>
    <recommendedName>
        <fullName evidence="1">tRNA dimethylallyltransferase 2</fullName>
        <ecNumber evidence="1">2.5.1.75</ecNumber>
    </recommendedName>
    <alternativeName>
        <fullName evidence="1">Dimethylallyl diphosphate:tRNA dimethylallyltransferase 2</fullName>
        <shortName evidence="1">DMAPP:tRNA dimethylallyltransferase 2</shortName>
        <shortName evidence="1">DMATase 2</shortName>
    </alternativeName>
    <alternativeName>
        <fullName evidence="1">Isopentenyl-diphosphate:tRNA isopentenyltransferase 2</fullName>
        <shortName evidence="1">IPP transferase 2</shortName>
        <shortName evidence="1">IPPT 2</shortName>
        <shortName evidence="1">IPTase 2</shortName>
    </alternativeName>
</protein>